<keyword id="KW-0067">ATP-binding</keyword>
<keyword id="KW-0324">Glycolysis</keyword>
<keyword id="KW-0327">Glycosome</keyword>
<keyword id="KW-0418">Kinase</keyword>
<keyword id="KW-0460">Magnesium</keyword>
<keyword id="KW-0479">Metal-binding</keyword>
<keyword id="KW-0547">Nucleotide-binding</keyword>
<keyword id="KW-0576">Peroxisome</keyword>
<keyword id="KW-0808">Transferase</keyword>
<accession>P08967</accession>
<protein>
    <recommendedName>
        <fullName>Phosphoglycerate kinase, glycosomal</fullName>
        <shortName>Phosphoglycerate kinase C</shortName>
        <ecNumber evidence="1">2.7.2.3</ecNumber>
    </recommendedName>
</protein>
<organism>
    <name type="scientific">Crithidia fasciculata</name>
    <dbReference type="NCBI Taxonomy" id="5656"/>
    <lineage>
        <taxon>Eukaryota</taxon>
        <taxon>Discoba</taxon>
        <taxon>Euglenozoa</taxon>
        <taxon>Kinetoplastea</taxon>
        <taxon>Metakinetoplastina</taxon>
        <taxon>Trypanosomatida</taxon>
        <taxon>Trypanosomatidae</taxon>
        <taxon>Leishmaniinae</taxon>
        <taxon>Crithidia</taxon>
    </lineage>
</organism>
<feature type="chain" id="PRO_0000145850" description="Phosphoglycerate kinase, glycosomal">
    <location>
        <begin position="1"/>
        <end position="455"/>
    </location>
</feature>
<feature type="region of interest" description="Topogenic signal" evidence="4">
    <location>
        <begin position="417"/>
        <end position="455"/>
    </location>
</feature>
<feature type="binding site" evidence="1">
    <location>
        <position position="23"/>
    </location>
    <ligand>
        <name>(2R)-3-phosphoglycerate</name>
        <dbReference type="ChEBI" id="CHEBI:58272"/>
    </ligand>
</feature>
<feature type="binding site" evidence="3">
    <location>
        <position position="24"/>
    </location>
    <ligand>
        <name>(2R)-3-phosphoglycerate</name>
        <dbReference type="ChEBI" id="CHEBI:58272"/>
    </ligand>
</feature>
<feature type="binding site" evidence="1">
    <location>
        <position position="25"/>
    </location>
    <ligand>
        <name>(2R)-3-phosphoglycerate</name>
        <dbReference type="ChEBI" id="CHEBI:58272"/>
    </ligand>
</feature>
<feature type="binding site" evidence="3">
    <location>
        <position position="26"/>
    </location>
    <ligand>
        <name>(2R)-3-phosphoglycerate</name>
        <dbReference type="ChEBI" id="CHEBI:58272"/>
    </ligand>
</feature>
<feature type="binding site" evidence="3">
    <location>
        <position position="39"/>
    </location>
    <ligand>
        <name>(2R)-3-phosphoglycerate</name>
        <dbReference type="ChEBI" id="CHEBI:58272"/>
    </ligand>
</feature>
<feature type="binding site" evidence="1">
    <location>
        <position position="61"/>
    </location>
    <ligand>
        <name>(2R)-3-phosphoglycerate</name>
        <dbReference type="ChEBI" id="CHEBI:58272"/>
    </ligand>
</feature>
<feature type="binding site" evidence="3">
    <location>
        <position position="62"/>
    </location>
    <ligand>
        <name>(2R)-3-phosphoglycerate</name>
        <dbReference type="ChEBI" id="CHEBI:58272"/>
    </ligand>
</feature>
<feature type="binding site" evidence="1">
    <location>
        <position position="64"/>
    </location>
    <ligand>
        <name>(2R)-3-phosphoglycerate</name>
        <dbReference type="ChEBI" id="CHEBI:58272"/>
    </ligand>
</feature>
<feature type="binding site" evidence="3">
    <location>
        <position position="65"/>
    </location>
    <ligand>
        <name>(2R)-3-phosphoglycerate</name>
        <dbReference type="ChEBI" id="CHEBI:58272"/>
    </ligand>
</feature>
<feature type="binding site" evidence="3">
    <location>
        <position position="132"/>
    </location>
    <ligand>
        <name>(2R)-3-phosphoglycerate</name>
        <dbReference type="ChEBI" id="CHEBI:58272"/>
    </ligand>
</feature>
<feature type="binding site" evidence="1">
    <location>
        <position position="168"/>
    </location>
    <ligand>
        <name>(2R)-3-phosphoglycerate</name>
        <dbReference type="ChEBI" id="CHEBI:58272"/>
    </ligand>
</feature>
<feature type="binding site" evidence="3">
    <location>
        <position position="169"/>
    </location>
    <ligand>
        <name>(2R)-3-phosphoglycerate</name>
        <dbReference type="ChEBI" id="CHEBI:58272"/>
    </ligand>
</feature>
<feature type="binding site" evidence="1">
    <location>
        <position position="214"/>
    </location>
    <ligand>
        <name>ADP</name>
        <dbReference type="ChEBI" id="CHEBI:456216"/>
    </ligand>
</feature>
<feature type="binding site" evidence="1">
    <location>
        <position position="214"/>
    </location>
    <ligand>
        <name>CDP</name>
        <dbReference type="ChEBI" id="CHEBI:58069"/>
    </ligand>
</feature>
<feature type="binding site" evidence="2">
    <location>
        <position position="215"/>
    </location>
    <ligand>
        <name>ADP</name>
        <dbReference type="ChEBI" id="CHEBI:456216"/>
    </ligand>
</feature>
<feature type="binding site" evidence="3">
    <location>
        <position position="215"/>
    </location>
    <ligand>
        <name>AMP</name>
        <dbReference type="ChEBI" id="CHEBI:456215"/>
    </ligand>
</feature>
<feature type="binding site" evidence="3">
    <location>
        <position position="215"/>
    </location>
    <ligand>
        <name>ATP</name>
        <dbReference type="ChEBI" id="CHEBI:30616"/>
    </ligand>
</feature>
<feature type="binding site" evidence="1">
    <location>
        <position position="215"/>
    </location>
    <ligand>
        <name>Mg(2+)</name>
        <dbReference type="ChEBI" id="CHEBI:18420"/>
    </ligand>
</feature>
<feature type="binding site" evidence="2">
    <location>
        <position position="216"/>
    </location>
    <ligand>
        <name>(2R)-3-phosphoglycerate</name>
        <dbReference type="ChEBI" id="CHEBI:58272"/>
    </ligand>
</feature>
<feature type="binding site" evidence="3">
    <location>
        <position position="216"/>
    </location>
    <ligand>
        <name>AMP</name>
        <dbReference type="ChEBI" id="CHEBI:456215"/>
    </ligand>
</feature>
<feature type="binding site" evidence="1">
    <location>
        <position position="219"/>
    </location>
    <ligand>
        <name>CDP</name>
        <dbReference type="ChEBI" id="CHEBI:58069"/>
    </ligand>
</feature>
<feature type="binding site" evidence="1">
    <location>
        <position position="219"/>
    </location>
    <ligand>
        <name>Mg(2+)</name>
        <dbReference type="ChEBI" id="CHEBI:18420"/>
    </ligand>
</feature>
<feature type="binding site" evidence="2">
    <location>
        <position position="220"/>
    </location>
    <ligand>
        <name>ADP</name>
        <dbReference type="ChEBI" id="CHEBI:456216"/>
    </ligand>
</feature>
<feature type="binding site" evidence="3">
    <location>
        <position position="220"/>
    </location>
    <ligand>
        <name>AMP</name>
        <dbReference type="ChEBI" id="CHEBI:456215"/>
    </ligand>
</feature>
<feature type="binding site" evidence="3">
    <location>
        <position position="220"/>
    </location>
    <ligand>
        <name>ATP</name>
        <dbReference type="ChEBI" id="CHEBI:30616"/>
    </ligand>
</feature>
<feature type="binding site" evidence="1">
    <location>
        <position position="238"/>
    </location>
    <ligand>
        <name>ADP</name>
        <dbReference type="ChEBI" id="CHEBI:456216"/>
    </ligand>
</feature>
<feature type="binding site" evidence="1">
    <location>
        <position position="238"/>
    </location>
    <ligand>
        <name>CDP</name>
        <dbReference type="ChEBI" id="CHEBI:58069"/>
    </ligand>
</feature>
<feature type="binding site" evidence="3">
    <location>
        <position position="239"/>
    </location>
    <ligand>
        <name>AMP</name>
        <dbReference type="ChEBI" id="CHEBI:456215"/>
    </ligand>
</feature>
<feature type="binding site" evidence="3">
    <location>
        <position position="239"/>
    </location>
    <ligand>
        <name>ATP</name>
        <dbReference type="ChEBI" id="CHEBI:30616"/>
    </ligand>
</feature>
<feature type="binding site" evidence="2">
    <location>
        <position position="311"/>
    </location>
    <ligand>
        <name>ADP</name>
        <dbReference type="ChEBI" id="CHEBI:456216"/>
    </ligand>
</feature>
<feature type="binding site" evidence="3">
    <location>
        <position position="311"/>
    </location>
    <ligand>
        <name>AMP</name>
        <dbReference type="ChEBI" id="CHEBI:456215"/>
    </ligand>
</feature>
<feature type="binding site" evidence="3">
    <location>
        <position position="311"/>
    </location>
    <ligand>
        <name>ATP</name>
        <dbReference type="ChEBI" id="CHEBI:30616"/>
    </ligand>
</feature>
<feature type="binding site" evidence="2">
    <location>
        <position position="335"/>
    </location>
    <ligand>
        <name>ADP</name>
        <dbReference type="ChEBI" id="CHEBI:456216"/>
    </ligand>
</feature>
<feature type="binding site" evidence="1">
    <location>
        <position position="336"/>
    </location>
    <ligand>
        <name>CDP</name>
        <dbReference type="ChEBI" id="CHEBI:58069"/>
    </ligand>
</feature>
<feature type="binding site" evidence="1">
    <location>
        <position position="341"/>
    </location>
    <ligand>
        <name>ADP</name>
        <dbReference type="ChEBI" id="CHEBI:456216"/>
    </ligand>
</feature>
<feature type="binding site" evidence="1">
    <location>
        <position position="341"/>
    </location>
    <ligand>
        <name>CDP</name>
        <dbReference type="ChEBI" id="CHEBI:58069"/>
    </ligand>
</feature>
<feature type="binding site" evidence="2">
    <location>
        <position position="342"/>
    </location>
    <ligand>
        <name>ADP</name>
        <dbReference type="ChEBI" id="CHEBI:456216"/>
    </ligand>
</feature>
<feature type="binding site" evidence="3">
    <location>
        <position position="342"/>
    </location>
    <ligand>
        <name>AMP</name>
        <dbReference type="ChEBI" id="CHEBI:456215"/>
    </ligand>
</feature>
<feature type="binding site" evidence="3">
    <location>
        <position position="342"/>
    </location>
    <ligand>
        <name>ATP</name>
        <dbReference type="ChEBI" id="CHEBI:30616"/>
    </ligand>
</feature>
<feature type="binding site" evidence="2">
    <location>
        <position position="374"/>
    </location>
    <ligand>
        <name>ADP</name>
        <dbReference type="ChEBI" id="CHEBI:456216"/>
    </ligand>
</feature>
<feature type="binding site" evidence="3">
    <location>
        <position position="374"/>
    </location>
    <ligand>
        <name>ATP</name>
        <dbReference type="ChEBI" id="CHEBI:30616"/>
    </ligand>
</feature>
<feature type="binding site" evidence="3">
    <location>
        <position position="374"/>
    </location>
    <ligand>
        <name>Mg(2+)</name>
        <dbReference type="ChEBI" id="CHEBI:18420"/>
    </ligand>
</feature>
<feature type="binding site" evidence="2">
    <location>
        <position position="375"/>
    </location>
    <ligand>
        <name>ADP</name>
        <dbReference type="ChEBI" id="CHEBI:456216"/>
    </ligand>
</feature>
<feature type="binding site" evidence="3">
    <location>
        <position position="375"/>
    </location>
    <ligand>
        <name>ATP</name>
        <dbReference type="ChEBI" id="CHEBI:30616"/>
    </ligand>
</feature>
<name>PGKC_CRIFA</name>
<gene>
    <name type="primary">PGKC</name>
    <name type="synonym">PGK-C</name>
</gene>
<proteinExistence type="inferred from homology"/>
<sequence>MSLVPKKSIDDAVVKGKKVLIRVDFNVPVKNGEITNDFRIRSALPTIQKVLKEGGSCILMSHLGRPKGAKMSDPKPAKSVRGYEEAATLRPVAARLSELLGQKVEFAPDCLDAASYAAKLKGGDVLLLENVRFYAEEGSKKEEERDAMAKVLAAYGDVYVSDAFGTAHRDSADMTGIPKVLGAGYAGYLMEKEINYFAQVLNNPPRPLVAIVGGAKVSDKIQLLDNMLGRINYLVIGGAMAYTFQKAQGHAIGISMCEEDKLDLAKSLLKKAQERNVEVLLPVDHVCNKEFQGVDAPLVTKDVEIPEGYMALDIGPKTIKIYEDVIAKCKSTIWNGPMGVFEMPCYSKGTFAVAKAMGNGTQKNGLMSIIGGGDTASAAELSGEAKNMSHVSTGGGASLELLEGKSLPGVTVLTNKDAKAPAAAAAAGGDCPCGSGCAAVPAAATATVSMVLASP</sequence>
<comment type="catalytic activity">
    <reaction evidence="1">
        <text>(2R)-3-phosphoglycerate + ATP = (2R)-3-phospho-glyceroyl phosphate + ADP</text>
        <dbReference type="Rhea" id="RHEA:14801"/>
        <dbReference type="ChEBI" id="CHEBI:30616"/>
        <dbReference type="ChEBI" id="CHEBI:57604"/>
        <dbReference type="ChEBI" id="CHEBI:58272"/>
        <dbReference type="ChEBI" id="CHEBI:456216"/>
        <dbReference type="EC" id="2.7.2.3"/>
    </reaction>
</comment>
<comment type="cofactor">
    <cofactor evidence="2">
        <name>Mg(2+)</name>
        <dbReference type="ChEBI" id="CHEBI:18420"/>
    </cofactor>
</comment>
<comment type="pathway">
    <text>Carbohydrate degradation; glycolysis; pyruvate from D-glyceraldehyde 3-phosphate: step 2/5.</text>
</comment>
<comment type="subunit">
    <text>Monomer.</text>
</comment>
<comment type="subcellular location">
    <subcellularLocation>
        <location>Glycosome</location>
    </subcellularLocation>
</comment>
<comment type="domain">
    <text>This glycosomal PGK has a C-terminal extension of 38 AA which is not present in the cytosolic isoenzyme. This domain most likely serves as topogenic signal to direct the glycosomal PKG to the glycosome.</text>
</comment>
<comment type="similarity">
    <text evidence="5">Belongs to the phosphoglycerate kinase family.</text>
</comment>
<evidence type="ECO:0000250" key="1">
    <source>
        <dbReference type="UniProtKB" id="P00558"/>
    </source>
</evidence>
<evidence type="ECO:0000250" key="2">
    <source>
        <dbReference type="UniProtKB" id="P07378"/>
    </source>
</evidence>
<evidence type="ECO:0000250" key="3">
    <source>
        <dbReference type="UniProtKB" id="Q7SIB7"/>
    </source>
</evidence>
<evidence type="ECO:0000255" key="4"/>
<evidence type="ECO:0000305" key="5"/>
<reference key="1">
    <citation type="journal article" date="1988" name="EMBO J.">
        <title>The topogenic signal of the glycosomal (microbody) phosphoglycerate kinase of Crithidia fasciculata resides in a carboxy-terminal extension.</title>
        <authorList>
            <person name="Swinkels B.W."/>
            <person name="Evers R."/>
            <person name="Borst P."/>
        </authorList>
    </citation>
    <scope>NUCLEOTIDE SEQUENCE [GENOMIC DNA]</scope>
</reference>
<dbReference type="EC" id="2.7.2.3" evidence="1"/>
<dbReference type="EMBL" id="X07459">
    <property type="protein sequence ID" value="CAA30342.1"/>
    <property type="molecule type" value="Genomic_DNA"/>
</dbReference>
<dbReference type="PIR" id="S00487">
    <property type="entry name" value="TVCRGG"/>
</dbReference>
<dbReference type="SMR" id="P08967"/>
<dbReference type="VEuPathDB" id="TriTrypDB:CFAC1_180006900"/>
<dbReference type="UniPathway" id="UPA00109">
    <property type="reaction ID" value="UER00185"/>
</dbReference>
<dbReference type="GO" id="GO:0005829">
    <property type="term" value="C:cytosol"/>
    <property type="evidence" value="ECO:0007669"/>
    <property type="project" value="TreeGrafter"/>
</dbReference>
<dbReference type="GO" id="GO:0020015">
    <property type="term" value="C:glycosome"/>
    <property type="evidence" value="ECO:0007669"/>
    <property type="project" value="UniProtKB-SubCell"/>
</dbReference>
<dbReference type="GO" id="GO:0043531">
    <property type="term" value="F:ADP binding"/>
    <property type="evidence" value="ECO:0007669"/>
    <property type="project" value="TreeGrafter"/>
</dbReference>
<dbReference type="GO" id="GO:0005524">
    <property type="term" value="F:ATP binding"/>
    <property type="evidence" value="ECO:0007669"/>
    <property type="project" value="UniProtKB-KW"/>
</dbReference>
<dbReference type="GO" id="GO:0046872">
    <property type="term" value="F:metal ion binding"/>
    <property type="evidence" value="ECO:0007669"/>
    <property type="project" value="UniProtKB-KW"/>
</dbReference>
<dbReference type="GO" id="GO:0004618">
    <property type="term" value="F:phosphoglycerate kinase activity"/>
    <property type="evidence" value="ECO:0007669"/>
    <property type="project" value="UniProtKB-EC"/>
</dbReference>
<dbReference type="GO" id="GO:0006094">
    <property type="term" value="P:gluconeogenesis"/>
    <property type="evidence" value="ECO:0007669"/>
    <property type="project" value="TreeGrafter"/>
</dbReference>
<dbReference type="GO" id="GO:0006096">
    <property type="term" value="P:glycolytic process"/>
    <property type="evidence" value="ECO:0007669"/>
    <property type="project" value="UniProtKB-UniPathway"/>
</dbReference>
<dbReference type="CDD" id="cd00318">
    <property type="entry name" value="Phosphoglycerate_kinase"/>
    <property type="match status" value="1"/>
</dbReference>
<dbReference type="FunFam" id="3.40.50.1260:FF:000001">
    <property type="entry name" value="Phosphoglycerate kinase"/>
    <property type="match status" value="1"/>
</dbReference>
<dbReference type="FunFam" id="3.40.50.1260:FF:000011">
    <property type="entry name" value="Phosphoglycerate kinase"/>
    <property type="match status" value="1"/>
</dbReference>
<dbReference type="Gene3D" id="3.40.50.1260">
    <property type="entry name" value="Phosphoglycerate kinase, N-terminal domain"/>
    <property type="match status" value="2"/>
</dbReference>
<dbReference type="HAMAP" id="MF_00145">
    <property type="entry name" value="Phosphoglyc_kinase"/>
    <property type="match status" value="1"/>
</dbReference>
<dbReference type="InterPro" id="IPR027250">
    <property type="entry name" value="Pgk_euglenozoa"/>
</dbReference>
<dbReference type="InterPro" id="IPR001576">
    <property type="entry name" value="Phosphoglycerate_kinase"/>
</dbReference>
<dbReference type="InterPro" id="IPR015911">
    <property type="entry name" value="Phosphoglycerate_kinase_CS"/>
</dbReference>
<dbReference type="InterPro" id="IPR015824">
    <property type="entry name" value="Phosphoglycerate_kinase_N"/>
</dbReference>
<dbReference type="InterPro" id="IPR036043">
    <property type="entry name" value="Phosphoglycerate_kinase_sf"/>
</dbReference>
<dbReference type="PANTHER" id="PTHR11406">
    <property type="entry name" value="PHOSPHOGLYCERATE KINASE"/>
    <property type="match status" value="1"/>
</dbReference>
<dbReference type="PANTHER" id="PTHR11406:SF23">
    <property type="entry name" value="PHOSPHOGLYCERATE KINASE 1, CHLOROPLASTIC-RELATED"/>
    <property type="match status" value="1"/>
</dbReference>
<dbReference type="Pfam" id="PF00162">
    <property type="entry name" value="PGK"/>
    <property type="match status" value="1"/>
</dbReference>
<dbReference type="PIRSF" id="PIRSF000724">
    <property type="entry name" value="Pgk"/>
    <property type="match status" value="1"/>
</dbReference>
<dbReference type="PIRSF" id="PIRSF500126">
    <property type="entry name" value="Pgk_euglenozoa"/>
    <property type="match status" value="1"/>
</dbReference>
<dbReference type="PRINTS" id="PR00477">
    <property type="entry name" value="PHGLYCKINASE"/>
</dbReference>
<dbReference type="SUPFAM" id="SSF53748">
    <property type="entry name" value="Phosphoglycerate kinase"/>
    <property type="match status" value="1"/>
</dbReference>
<dbReference type="PROSITE" id="PS00111">
    <property type="entry name" value="PGLYCERATE_KINASE"/>
    <property type="match status" value="1"/>
</dbReference>